<keyword id="KW-0963">Cytoplasm</keyword>
<keyword id="KW-0671">Queuosine biosynthesis</keyword>
<keyword id="KW-0949">S-adenosyl-L-methionine</keyword>
<keyword id="KW-0808">Transferase</keyword>
<dbReference type="EC" id="2.4.99.17" evidence="1"/>
<dbReference type="EMBL" id="CP000789">
    <property type="protein sequence ID" value="ABU70038.1"/>
    <property type="molecule type" value="Genomic_DNA"/>
</dbReference>
<dbReference type="RefSeq" id="WP_012127082.1">
    <property type="nucleotide sequence ID" value="NC_009783.1"/>
</dbReference>
<dbReference type="SMR" id="A7MT82"/>
<dbReference type="KEGG" id="vha:VIBHAR_01045"/>
<dbReference type="PATRIC" id="fig|338187.25.peg.1583"/>
<dbReference type="UniPathway" id="UPA00392"/>
<dbReference type="Proteomes" id="UP000008152">
    <property type="component" value="Chromosome I"/>
</dbReference>
<dbReference type="GO" id="GO:0005737">
    <property type="term" value="C:cytoplasm"/>
    <property type="evidence" value="ECO:0007669"/>
    <property type="project" value="UniProtKB-SubCell"/>
</dbReference>
<dbReference type="GO" id="GO:0051075">
    <property type="term" value="F:S-adenosylmethionine:tRNA ribosyltransferase-isomerase activity"/>
    <property type="evidence" value="ECO:0007669"/>
    <property type="project" value="UniProtKB-EC"/>
</dbReference>
<dbReference type="GO" id="GO:0008616">
    <property type="term" value="P:queuosine biosynthetic process"/>
    <property type="evidence" value="ECO:0007669"/>
    <property type="project" value="UniProtKB-UniRule"/>
</dbReference>
<dbReference type="GO" id="GO:0002099">
    <property type="term" value="P:tRNA wobble guanine modification"/>
    <property type="evidence" value="ECO:0007669"/>
    <property type="project" value="TreeGrafter"/>
</dbReference>
<dbReference type="FunFam" id="2.40.10.240:FF:000001">
    <property type="entry name" value="S-adenosylmethionine:tRNA ribosyltransferase-isomerase"/>
    <property type="match status" value="1"/>
</dbReference>
<dbReference type="FunFam" id="3.40.1780.10:FF:000001">
    <property type="entry name" value="S-adenosylmethionine:tRNA ribosyltransferase-isomerase"/>
    <property type="match status" value="1"/>
</dbReference>
<dbReference type="Gene3D" id="2.40.10.240">
    <property type="entry name" value="QueA-like"/>
    <property type="match status" value="1"/>
</dbReference>
<dbReference type="Gene3D" id="3.40.1780.10">
    <property type="entry name" value="QueA-like"/>
    <property type="match status" value="1"/>
</dbReference>
<dbReference type="HAMAP" id="MF_00113">
    <property type="entry name" value="QueA"/>
    <property type="match status" value="1"/>
</dbReference>
<dbReference type="InterPro" id="IPR003699">
    <property type="entry name" value="QueA"/>
</dbReference>
<dbReference type="InterPro" id="IPR042118">
    <property type="entry name" value="QueA_dom1"/>
</dbReference>
<dbReference type="InterPro" id="IPR042119">
    <property type="entry name" value="QueA_dom2"/>
</dbReference>
<dbReference type="InterPro" id="IPR036100">
    <property type="entry name" value="QueA_sf"/>
</dbReference>
<dbReference type="NCBIfam" id="NF001140">
    <property type="entry name" value="PRK00147.1"/>
    <property type="match status" value="1"/>
</dbReference>
<dbReference type="NCBIfam" id="TIGR00113">
    <property type="entry name" value="queA"/>
    <property type="match status" value="1"/>
</dbReference>
<dbReference type="PANTHER" id="PTHR30307">
    <property type="entry name" value="S-ADENOSYLMETHIONINE:TRNA RIBOSYLTRANSFERASE-ISOMERASE"/>
    <property type="match status" value="1"/>
</dbReference>
<dbReference type="PANTHER" id="PTHR30307:SF0">
    <property type="entry name" value="S-ADENOSYLMETHIONINE:TRNA RIBOSYLTRANSFERASE-ISOMERASE"/>
    <property type="match status" value="1"/>
</dbReference>
<dbReference type="Pfam" id="PF02547">
    <property type="entry name" value="Queuosine_synth"/>
    <property type="match status" value="1"/>
</dbReference>
<dbReference type="SUPFAM" id="SSF111337">
    <property type="entry name" value="QueA-like"/>
    <property type="match status" value="1"/>
</dbReference>
<protein>
    <recommendedName>
        <fullName evidence="1">S-adenosylmethionine:tRNA ribosyltransferase-isomerase</fullName>
        <ecNumber evidence="1">2.4.99.17</ecNumber>
    </recommendedName>
    <alternativeName>
        <fullName evidence="1">Queuosine biosynthesis protein QueA</fullName>
    </alternativeName>
</protein>
<gene>
    <name evidence="1" type="primary">queA</name>
    <name type="ordered locus">VIBHAR_01045</name>
</gene>
<sequence length="350" mass="39029">MQVSDFHFDLPDELIARYPQPERTASRLLQMDGNTGELIDGTFSDVLEQVQAGDLVVFNNTRVIPARLFGRKESGGKLEVLVERMLNEKSILAHVRCSKSPKPGTTILVGENDEYSAQMVARHDALFELKFNSDKTVLEILEEIGHMPLPPYIDRPDEDADKERYQTVYNQKPGAVAAPTAGLHFDDVLLEKITAKGAEFAYVTLHVGAGTFQPVKVDDIDDHHMHAEYVEVPQDVVDAINATKARGGRVVAVGTTSVRSLESAAQDALKKGTELVPFFGDTEIFIYPGYEYQLVDCLITNFHLPESTLIMLVSAFAGYENTMNAYKHAVENKYRFFSYGDSMFIKKKTA</sequence>
<reference key="1">
    <citation type="submission" date="2007-08" db="EMBL/GenBank/DDBJ databases">
        <authorList>
            <consortium name="The Vibrio harveyi Genome Sequencing Project"/>
            <person name="Bassler B."/>
            <person name="Clifton S.W."/>
            <person name="Fulton L."/>
            <person name="Delehaunty K."/>
            <person name="Fronick C."/>
            <person name="Harrison M."/>
            <person name="Markivic C."/>
            <person name="Fulton R."/>
            <person name="Tin-Wollam A.-M."/>
            <person name="Shah N."/>
            <person name="Pepin K."/>
            <person name="Nash W."/>
            <person name="Thiruvilangam P."/>
            <person name="Bhonagiri V."/>
            <person name="Waters C."/>
            <person name="Tu K.C."/>
            <person name="Irgon J."/>
            <person name="Wilson R.K."/>
        </authorList>
    </citation>
    <scope>NUCLEOTIDE SEQUENCE [LARGE SCALE GENOMIC DNA]</scope>
    <source>
        <strain>ATCC BAA-1116 / BB120</strain>
    </source>
</reference>
<name>QUEA_VIBC1</name>
<accession>A7MT82</accession>
<proteinExistence type="inferred from homology"/>
<organism>
    <name type="scientific">Vibrio campbellii (strain ATCC BAA-1116)</name>
    <dbReference type="NCBI Taxonomy" id="2902295"/>
    <lineage>
        <taxon>Bacteria</taxon>
        <taxon>Pseudomonadati</taxon>
        <taxon>Pseudomonadota</taxon>
        <taxon>Gammaproteobacteria</taxon>
        <taxon>Vibrionales</taxon>
        <taxon>Vibrionaceae</taxon>
        <taxon>Vibrio</taxon>
    </lineage>
</organism>
<comment type="function">
    <text evidence="1">Transfers and isomerizes the ribose moiety from AdoMet to the 7-aminomethyl group of 7-deazaguanine (preQ1-tRNA) to give epoxyqueuosine (oQ-tRNA).</text>
</comment>
<comment type="catalytic activity">
    <reaction evidence="1">
        <text>7-aminomethyl-7-carbaguanosine(34) in tRNA + S-adenosyl-L-methionine = epoxyqueuosine(34) in tRNA + adenine + L-methionine + 2 H(+)</text>
        <dbReference type="Rhea" id="RHEA:32155"/>
        <dbReference type="Rhea" id="RHEA-COMP:10342"/>
        <dbReference type="Rhea" id="RHEA-COMP:18582"/>
        <dbReference type="ChEBI" id="CHEBI:15378"/>
        <dbReference type="ChEBI" id="CHEBI:16708"/>
        <dbReference type="ChEBI" id="CHEBI:57844"/>
        <dbReference type="ChEBI" id="CHEBI:59789"/>
        <dbReference type="ChEBI" id="CHEBI:82833"/>
        <dbReference type="ChEBI" id="CHEBI:194443"/>
        <dbReference type="EC" id="2.4.99.17"/>
    </reaction>
</comment>
<comment type="pathway">
    <text evidence="1">tRNA modification; tRNA-queuosine biosynthesis.</text>
</comment>
<comment type="subunit">
    <text evidence="1">Monomer.</text>
</comment>
<comment type="subcellular location">
    <subcellularLocation>
        <location evidence="1">Cytoplasm</location>
    </subcellularLocation>
</comment>
<comment type="similarity">
    <text evidence="1">Belongs to the QueA family.</text>
</comment>
<feature type="chain" id="PRO_1000015306" description="S-adenosylmethionine:tRNA ribosyltransferase-isomerase">
    <location>
        <begin position="1"/>
        <end position="350"/>
    </location>
</feature>
<evidence type="ECO:0000255" key="1">
    <source>
        <dbReference type="HAMAP-Rule" id="MF_00113"/>
    </source>
</evidence>